<organism>
    <name type="scientific">Staphylococcus aureus (strain N315)</name>
    <dbReference type="NCBI Taxonomy" id="158879"/>
    <lineage>
        <taxon>Bacteria</taxon>
        <taxon>Bacillati</taxon>
        <taxon>Bacillota</taxon>
        <taxon>Bacilli</taxon>
        <taxon>Bacillales</taxon>
        <taxon>Staphylococcaceae</taxon>
        <taxon>Staphylococcus</taxon>
    </lineage>
</organism>
<accession>Q99VJ4</accession>
<name>CLFA_STAAN</name>
<dbReference type="EMBL" id="BA000018">
    <property type="protein sequence ID" value="BAB41975.1"/>
    <property type="molecule type" value="Genomic_DNA"/>
</dbReference>
<dbReference type="PIR" id="D89852">
    <property type="entry name" value="D89852"/>
</dbReference>
<dbReference type="RefSeq" id="WP_001056195.1">
    <property type="nucleotide sequence ID" value="NC_002745.2"/>
</dbReference>
<dbReference type="SMR" id="Q99VJ4"/>
<dbReference type="ABCD" id="Q99VJ4">
    <property type="antibodies" value="14 sequenced antibodies"/>
</dbReference>
<dbReference type="EnsemblBacteria" id="BAB41975">
    <property type="protein sequence ID" value="BAB41975"/>
    <property type="gene ID" value="BAB41975"/>
</dbReference>
<dbReference type="KEGG" id="sau:SA0742"/>
<dbReference type="HOGENOM" id="CLU_010159_0_0_9"/>
<dbReference type="PRO" id="PR:Q99VJ4"/>
<dbReference type="GO" id="GO:0005576">
    <property type="term" value="C:extracellular region"/>
    <property type="evidence" value="ECO:0007669"/>
    <property type="project" value="UniProtKB-KW"/>
</dbReference>
<dbReference type="GO" id="GO:0007155">
    <property type="term" value="P:cell adhesion"/>
    <property type="evidence" value="ECO:0007669"/>
    <property type="project" value="InterPro"/>
</dbReference>
<dbReference type="Gene3D" id="2.60.40.1280">
    <property type="match status" value="1"/>
</dbReference>
<dbReference type="Gene3D" id="2.60.40.1290">
    <property type="match status" value="1"/>
</dbReference>
<dbReference type="InterPro" id="IPR011266">
    <property type="entry name" value="Adhesin_Fg-bd_dom_2"/>
</dbReference>
<dbReference type="InterPro" id="IPR008966">
    <property type="entry name" value="Adhesion_dom_sf"/>
</dbReference>
<dbReference type="InterPro" id="IPR011252">
    <property type="entry name" value="Fibrogen-bd_dom1"/>
</dbReference>
<dbReference type="InterPro" id="IPR019931">
    <property type="entry name" value="LPXTG_anchor"/>
</dbReference>
<dbReference type="InterPro" id="IPR050972">
    <property type="entry name" value="SDr-like"/>
</dbReference>
<dbReference type="InterPro" id="IPR041171">
    <property type="entry name" value="SDR_Ig"/>
</dbReference>
<dbReference type="InterPro" id="IPR005877">
    <property type="entry name" value="YSIRK_signal_dom"/>
</dbReference>
<dbReference type="NCBIfam" id="TIGR01167">
    <property type="entry name" value="LPXTG_anchor"/>
    <property type="match status" value="1"/>
</dbReference>
<dbReference type="NCBIfam" id="NF033609">
    <property type="entry name" value="MSCRAMM_ClfA"/>
    <property type="match status" value="1"/>
</dbReference>
<dbReference type="NCBIfam" id="TIGR01168">
    <property type="entry name" value="YSIRK_signal"/>
    <property type="match status" value="1"/>
</dbReference>
<dbReference type="PANTHER" id="PTHR34403">
    <property type="entry name" value="TOL-PAL SYSTEM PROTEIN TOLA"/>
    <property type="match status" value="1"/>
</dbReference>
<dbReference type="PANTHER" id="PTHR34403:SF8">
    <property type="entry name" value="TOL-PAL SYSTEM PROTEIN TOLA"/>
    <property type="match status" value="1"/>
</dbReference>
<dbReference type="Pfam" id="PF17961">
    <property type="entry name" value="Big_8"/>
    <property type="match status" value="1"/>
</dbReference>
<dbReference type="Pfam" id="PF00746">
    <property type="entry name" value="Gram_pos_anchor"/>
    <property type="match status" value="1"/>
</dbReference>
<dbReference type="Pfam" id="PF10425">
    <property type="entry name" value="SdrG_C_C"/>
    <property type="match status" value="1"/>
</dbReference>
<dbReference type="Pfam" id="PF04650">
    <property type="entry name" value="YSIRK_signal"/>
    <property type="match status" value="1"/>
</dbReference>
<dbReference type="SUPFAM" id="SSF49401">
    <property type="entry name" value="Bacterial adhesins"/>
    <property type="match status" value="2"/>
</dbReference>
<dbReference type="PROSITE" id="PS50847">
    <property type="entry name" value="GRAM_POS_ANCHORING"/>
    <property type="match status" value="1"/>
</dbReference>
<gene>
    <name type="primary">clfA</name>
    <name type="ordered locus">SA0742</name>
</gene>
<evidence type="ECO:0000250" key="1"/>
<evidence type="ECO:0000250" key="2">
    <source>
        <dbReference type="UniProtKB" id="Q2G015"/>
    </source>
</evidence>
<evidence type="ECO:0000255" key="3"/>
<evidence type="ECO:0000255" key="4">
    <source>
        <dbReference type="PROSITE-ProRule" id="PRU00477"/>
    </source>
</evidence>
<evidence type="ECO:0000256" key="5">
    <source>
        <dbReference type="SAM" id="MobiDB-lite"/>
    </source>
</evidence>
<evidence type="ECO:0000305" key="6"/>
<proteinExistence type="evidence at protein level"/>
<feature type="signal peptide" evidence="3">
    <location>
        <begin position="1"/>
        <end position="39"/>
    </location>
</feature>
<feature type="chain" id="PRO_0000041996" description="Clumping factor A">
    <location>
        <begin position="40"/>
        <end position="955"/>
    </location>
</feature>
<feature type="propeptide" id="PRO_0000041997" description="Removed by sortase" evidence="4">
    <location>
        <begin position="956"/>
        <end position="989"/>
    </location>
</feature>
<feature type="region of interest" description="Disordered" evidence="5">
    <location>
        <begin position="34"/>
        <end position="205"/>
    </location>
</feature>
<feature type="region of interest" description="Ligand binding A region" evidence="1">
    <location>
        <begin position="40"/>
        <end position="542"/>
    </location>
</feature>
<feature type="region of interest" description="Disordered" evidence="5">
    <location>
        <begin position="529"/>
        <end position="960"/>
    </location>
</feature>
<feature type="short sequence motif" description="YSIRK-G/S signaling motif" evidence="2">
    <location>
        <begin position="9"/>
        <end position="20"/>
    </location>
</feature>
<feature type="short sequence motif" description="LPXTG sorting signal" evidence="4">
    <location>
        <begin position="952"/>
        <end position="956"/>
    </location>
</feature>
<feature type="compositionally biased region" description="Low complexity" evidence="5">
    <location>
        <begin position="47"/>
        <end position="65"/>
    </location>
</feature>
<feature type="compositionally biased region" description="Polar residues" evidence="5">
    <location>
        <begin position="71"/>
        <end position="105"/>
    </location>
</feature>
<feature type="compositionally biased region" description="Low complexity" evidence="5">
    <location>
        <begin position="106"/>
        <end position="132"/>
    </location>
</feature>
<feature type="compositionally biased region" description="Low complexity" evidence="5">
    <location>
        <begin position="143"/>
        <end position="162"/>
    </location>
</feature>
<feature type="compositionally biased region" description="Polar residues" evidence="5">
    <location>
        <begin position="163"/>
        <end position="205"/>
    </location>
</feature>
<feature type="compositionally biased region" description="Acidic residues" evidence="5">
    <location>
        <begin position="547"/>
        <end position="565"/>
    </location>
</feature>
<feature type="compositionally biased region" description="Low complexity" evidence="5">
    <location>
        <begin position="566"/>
        <end position="598"/>
    </location>
</feature>
<feature type="compositionally biased region" description="Acidic residues" evidence="5">
    <location>
        <begin position="599"/>
        <end position="917"/>
    </location>
</feature>
<feature type="compositionally biased region" description="Low complexity" evidence="5">
    <location>
        <begin position="918"/>
        <end position="936"/>
    </location>
</feature>
<feature type="compositionally biased region" description="Basic and acidic residues" evidence="5">
    <location>
        <begin position="943"/>
        <end position="952"/>
    </location>
</feature>
<feature type="modified residue" description="Pentaglycyl murein peptidoglycan amidated threonine" evidence="4">
    <location>
        <position position="955"/>
    </location>
</feature>
<protein>
    <recommendedName>
        <fullName>Clumping factor A</fullName>
    </recommendedName>
    <alternativeName>
        <fullName>Fibrinogen receptor A</fullName>
    </alternativeName>
    <alternativeName>
        <fullName>Fibrinogen-binding protein A</fullName>
    </alternativeName>
</protein>
<comment type="function">
    <text evidence="1">Cell surface-associated protein implicated in virulence. Promotes bacterial attachment exclusively to the gamma-chain of human fibrinogen. Induces formation of bacterial clumps, which diminish the ability of group IIA phospholipase A2 to cause bacterial phospholipid hydrolysis and killing. Significantly decreases macrophage phagocytosis possibly thanks to the clumps, clumped bacteria being too large to be phagocytosed. Dominant factor responsible for human platelet aggregation, which may be an important mechanism for initiating infective endocarditis (By similarity).</text>
</comment>
<comment type="subcellular location">
    <subcellularLocation>
        <location evidence="4">Secreted</location>
        <location evidence="4">Cell wall</location>
        <topology evidence="4">Peptidoglycan-anchor</topology>
    </subcellularLocation>
    <text evidence="2">Anchored to the cell wall by sortase A (By similarity).</text>
</comment>
<comment type="similarity">
    <text evidence="6">Belongs to the serine-aspartate repeat-containing protein (SDr) family.</text>
</comment>
<reference key="1">
    <citation type="journal article" date="2001" name="Lancet">
        <title>Whole genome sequencing of meticillin-resistant Staphylococcus aureus.</title>
        <authorList>
            <person name="Kuroda M."/>
            <person name="Ohta T."/>
            <person name="Uchiyama I."/>
            <person name="Baba T."/>
            <person name="Yuzawa H."/>
            <person name="Kobayashi I."/>
            <person name="Cui L."/>
            <person name="Oguchi A."/>
            <person name="Aoki K."/>
            <person name="Nagai Y."/>
            <person name="Lian J.-Q."/>
            <person name="Ito T."/>
            <person name="Kanamori M."/>
            <person name="Matsumaru H."/>
            <person name="Maruyama A."/>
            <person name="Murakami H."/>
            <person name="Hosoyama A."/>
            <person name="Mizutani-Ui Y."/>
            <person name="Takahashi N.K."/>
            <person name="Sawano T."/>
            <person name="Inoue R."/>
            <person name="Kaito C."/>
            <person name="Sekimizu K."/>
            <person name="Hirakawa H."/>
            <person name="Kuhara S."/>
            <person name="Goto S."/>
            <person name="Yabuzaki J."/>
            <person name="Kanehisa M."/>
            <person name="Yamashita A."/>
            <person name="Oshima K."/>
            <person name="Furuya K."/>
            <person name="Yoshino C."/>
            <person name="Shiba T."/>
            <person name="Hattori M."/>
            <person name="Ogasawara N."/>
            <person name="Hayashi H."/>
            <person name="Hiramatsu K."/>
        </authorList>
    </citation>
    <scope>NUCLEOTIDE SEQUENCE [LARGE SCALE GENOMIC DNA]</scope>
    <source>
        <strain>N315</strain>
    </source>
</reference>
<reference key="2">
    <citation type="submission" date="2007-10" db="UniProtKB">
        <title>Shotgun proteomic analysis of total and membrane protein extracts of S. aureus strain N315.</title>
        <authorList>
            <person name="Vaezzadeh A.R."/>
            <person name="Deshusses J."/>
            <person name="Lescuyer P."/>
            <person name="Hochstrasser D.F."/>
        </authorList>
    </citation>
    <scope>IDENTIFICATION BY MASS SPECTROMETRY [LARGE SCALE ANALYSIS]</scope>
    <source>
        <strain>N315</strain>
    </source>
</reference>
<keyword id="KW-0134">Cell wall</keyword>
<keyword id="KW-0572">Peptidoglycan-anchor</keyword>
<keyword id="KW-0964">Secreted</keyword>
<keyword id="KW-0732">Signal</keyword>
<keyword id="KW-0843">Virulence</keyword>
<sequence length="989" mass="102409">MNMKKKEKHAIRKKSIGVASVLVGTLIGFGLLSSKEADASENSVTQSDSASNESKSNDSSSVSAAPKTDDTNVSDTKTSSNTNNGETSVAQNPAQQETTQSSSTNATTEETPVTGEATTTTTNQANTPATTQSSNTNAEELVNQTSNETTSNDTNTVSSVNSPQNSTNAENVSTTQDTSTEATPSNNESAPQNTDASNKDVVSQAVNPSTPRMRAFSLAAVAADAPAAGTDITNQLTDVKVTIDSGTTVYPHQAGYVKLNYGFSVPNSAVKGDTFKITVPKELNLNGVTSTAKVPPIMAGDQVLANGVIDSDGNVIYTFTDYVDNKENVTANITMPAYIDPENVTKTGNVTLTTGIGTNTASKTVLIDYEKYGQFHNLSIKGTIDQIDKTNNTYRQTIYVNPSGDNVVLPALTGNLIPNTKSNALIDAKNTDIKVYRVDNANDLSESYYVNPSDFEDVTNQVRISFPNANQYKVEFPTDDDQITTPYIVVVNGHIDPASTGDLALRSTFYGYDSNFIWRSMSWDNEVAFNNGSGSGDGIDKPVVPEQPDEPGEIEPIPEDSDSDPGSDSGSDSNSDSGSDSGSDSTSDSGSDSASDSDSASDSDSASDSDSASDSDSASDSDSASDSDSASDSDSASDSDSASDSDSASDSDSASDSDSASDSDSASDSDSDSDSDSDSDSDSDSDSDSDSDSDSDSDSDSDSDSDSDSDSDSDSDSDSDSDSDSDSDSDSDSDSDSDSDSDSDSDSDSDSDSDSDSDSDSDSDSDSDSDSDSDSDSDSDSDSDSDSDSDSDSDSDSDSDSDSDSDSDSDSDSDSDSDSDSASDSDSDSDSESDSDSDSDSDSDSDSDSDSDSDSESDSDSDSDSDSESDSDSDSDSDSDSASDSDSGSDSDSSSDSDSDSTSDTGSDNDSDSDSNSDSESGSNNNVVPPNSPKNGTNASNKNEAKDSKEPLPDTGSEDEANTSLIWGLLASLGSLLLFRRKKENKDKK</sequence>